<name>AG1_XENLA</name>
<sequence>MQAGLSLVCLVLLCSALGEAVLKKPKKQAGTTDTKTDQEPAPIKTKGLKTLDRGWGESIEWVQTYEEGLAKARENNKPLMVIHHLEDCPYSIALKKAFVADRMAQKLAQEDFIMLNLVHPVADENQSPDGHYVPRVIFIDPSLTVRSDLKGRYGNKMYAYDADDIPELITNMKKAKSFLKTEL</sequence>
<organism>
    <name type="scientific">Xenopus laevis</name>
    <name type="common">African clawed frog</name>
    <dbReference type="NCBI Taxonomy" id="8355"/>
    <lineage>
        <taxon>Eukaryota</taxon>
        <taxon>Metazoa</taxon>
        <taxon>Chordata</taxon>
        <taxon>Craniata</taxon>
        <taxon>Vertebrata</taxon>
        <taxon>Euteleostomi</taxon>
        <taxon>Amphibia</taxon>
        <taxon>Batrachia</taxon>
        <taxon>Anura</taxon>
        <taxon>Pipoidea</taxon>
        <taxon>Pipidae</taxon>
        <taxon>Xenopodinae</taxon>
        <taxon>Xenopus</taxon>
        <taxon>Xenopus</taxon>
    </lineage>
</organism>
<gene>
    <name type="primary">ag1</name>
    <name type="synonym">ag</name>
</gene>
<accession>P55868</accession>
<accession>Q5D0A7</accession>
<proteinExistence type="evidence at protein level"/>
<keyword id="KW-1185">Reference proteome</keyword>
<keyword id="KW-0964">Secreted</keyword>
<keyword id="KW-0732">Signal</keyword>
<comment type="function">
    <text>Does not appear to be required for cement gland formation.</text>
</comment>
<comment type="subcellular location">
    <subcellularLocation>
        <location evidence="4">Secreted</location>
    </subcellularLocation>
</comment>
<comment type="tissue specificity">
    <text evidence="2 3">From stage 18 (neurula) onward, expressed in the cement gland until it degenerates. More weakly expressed in the adjacent hatching gland.</text>
</comment>
<comment type="similarity">
    <text evidence="4">Belongs to the AGR family.</text>
</comment>
<protein>
    <recommendedName>
        <fullName>Anterior gradient protein 1</fullName>
        <shortName>XAG-1</shortName>
    </recommendedName>
    <alternativeName>
        <fullName>XAG</fullName>
    </alternativeName>
</protein>
<feature type="signal peptide" evidence="1">
    <location>
        <begin position="1"/>
        <end position="18"/>
    </location>
</feature>
<feature type="chain" id="PRO_0000001042" description="Anterior gradient protein 1">
    <location>
        <begin position="19"/>
        <end position="183"/>
    </location>
</feature>
<dbReference type="EMBL" id="U76752">
    <property type="protein sequence ID" value="AAB18819.1"/>
    <property type="molecule type" value="mRNA"/>
</dbReference>
<dbReference type="EMBL" id="BC046838">
    <property type="protein sequence ID" value="AAH46838.1"/>
    <property type="molecule type" value="mRNA"/>
</dbReference>
<dbReference type="RefSeq" id="NP_001079667.1">
    <property type="nucleotide sequence ID" value="NM_001086198.1"/>
</dbReference>
<dbReference type="SMR" id="P55868"/>
<dbReference type="DNASU" id="379354"/>
<dbReference type="GeneID" id="379354"/>
<dbReference type="KEGG" id="xla:379354"/>
<dbReference type="AGR" id="Xenbase:XB-GENE-5866216"/>
<dbReference type="CTD" id="379354"/>
<dbReference type="Xenbase" id="XB-GENE-5866216">
    <property type="gene designation" value="ag1.L"/>
</dbReference>
<dbReference type="OMA" id="VIHHKED"/>
<dbReference type="OrthoDB" id="262308at2759"/>
<dbReference type="Proteomes" id="UP000186698">
    <property type="component" value="Chromosome 9_10L"/>
</dbReference>
<dbReference type="Bgee" id="379354">
    <property type="expression patterns" value="Expressed in stomach and 9 other cell types or tissues"/>
</dbReference>
<dbReference type="GO" id="GO:0005783">
    <property type="term" value="C:endoplasmic reticulum"/>
    <property type="evidence" value="ECO:0000318"/>
    <property type="project" value="GO_Central"/>
</dbReference>
<dbReference type="GO" id="GO:0005576">
    <property type="term" value="C:extracellular region"/>
    <property type="evidence" value="ECO:0000250"/>
    <property type="project" value="UniProtKB"/>
</dbReference>
<dbReference type="GO" id="GO:0002162">
    <property type="term" value="F:dystroglycan binding"/>
    <property type="evidence" value="ECO:0000318"/>
    <property type="project" value="GO_Central"/>
</dbReference>
<dbReference type="CDD" id="cd02960">
    <property type="entry name" value="AGR"/>
    <property type="match status" value="1"/>
</dbReference>
<dbReference type="FunFam" id="3.40.30.10:FF:000036">
    <property type="entry name" value="anterior gradient protein 2 homolog"/>
    <property type="match status" value="1"/>
</dbReference>
<dbReference type="Gene3D" id="3.40.30.10">
    <property type="entry name" value="Glutaredoxin"/>
    <property type="match status" value="1"/>
</dbReference>
<dbReference type="InterPro" id="IPR051099">
    <property type="entry name" value="AGR/TXD"/>
</dbReference>
<dbReference type="InterPro" id="IPR036249">
    <property type="entry name" value="Thioredoxin-like_sf"/>
</dbReference>
<dbReference type="PANTHER" id="PTHR15337:SF24">
    <property type="entry name" value="ANTERIOR GRADIENT PROTEIN 1"/>
    <property type="match status" value="1"/>
</dbReference>
<dbReference type="PANTHER" id="PTHR15337">
    <property type="entry name" value="ANTERIOR GRADIENT PROTEIN-RELATED"/>
    <property type="match status" value="1"/>
</dbReference>
<dbReference type="Pfam" id="PF13899">
    <property type="entry name" value="Thioredoxin_7"/>
    <property type="match status" value="1"/>
</dbReference>
<dbReference type="SUPFAM" id="SSF52833">
    <property type="entry name" value="Thioredoxin-like"/>
    <property type="match status" value="1"/>
</dbReference>
<evidence type="ECO:0000255" key="1"/>
<evidence type="ECO:0000269" key="2">
    <source>
    </source>
</evidence>
<evidence type="ECO:0000269" key="3">
    <source>
    </source>
</evidence>
<evidence type="ECO:0000305" key="4"/>
<reference key="1">
    <citation type="journal article" date="1989" name="Cell">
        <title>Progressive determination during formation of the anteroposterior axis in Xenopus laevis.</title>
        <authorList>
            <person name="Sive H.L."/>
            <person name="Hattori K."/>
            <person name="Weintraub H."/>
        </authorList>
    </citation>
    <scope>NUCLEOTIDE SEQUENCE [MRNA]</scope>
    <scope>TISSUE SPECIFICITY</scope>
    <source>
        <tissue>Embryonic head</tissue>
    </source>
</reference>
<reference key="2">
    <citation type="submission" date="2003-02" db="EMBL/GenBank/DDBJ databases">
        <authorList>
            <consortium name="NIH - Xenopus Gene Collection (XGC) project"/>
        </authorList>
    </citation>
    <scope>NUCLEOTIDE SEQUENCE [LARGE SCALE MRNA]</scope>
    <source>
        <tissue>Tail bud</tissue>
    </source>
</reference>
<reference key="3">
    <citation type="journal article" date="1990" name="Development">
        <title>Localization of specific mRNAs in Xenopus embryos by whole-mount in situ hybridization.</title>
        <authorList>
            <person name="Hemmati-Brivanlou A."/>
            <person name="Frank D."/>
            <person name="Bolce M.E."/>
            <person name="Brown B.D."/>
            <person name="Sive H.L."/>
            <person name="Harland R.M."/>
        </authorList>
    </citation>
    <scope>TISSUE SPECIFICITY</scope>
</reference>
<reference key="4">
    <citation type="journal article" date="1998" name="Mech. Dev.">
        <title>Anterior specification of embryonic ectoderm: the role of the Xenopus cement gland-specific gene XAG-2.</title>
        <authorList>
            <person name="Aberger F."/>
            <person name="Weidinger G."/>
            <person name="Grunz H."/>
            <person name="Richter K."/>
        </authorList>
    </citation>
    <scope>LACK OF FUNCTION IN CEMENT GLAND FORMATION</scope>
</reference>